<reference evidence="3" key="1">
    <citation type="journal article" date="2007" name="Biochimie">
        <title>Seed defensins from T. kiharae and related species: Genome localization of defensin-encoding genes.</title>
        <authorList>
            <person name="Odintsova T.I."/>
            <person name="Egorov T.A."/>
            <person name="Musolyamov A.K."/>
            <person name="Odintsova M.S."/>
            <person name="Pukhalsky V.A."/>
            <person name="Grishin E.V."/>
        </authorList>
    </citation>
    <scope>PROTEIN SEQUENCE</scope>
    <scope>MASS SPECTROMETRY</scope>
    <source>
        <tissue evidence="2">Seed</tissue>
    </source>
</reference>
<name>DEF11_TRIKH</name>
<dbReference type="SMR" id="P84965"/>
<dbReference type="GO" id="GO:0050832">
    <property type="term" value="P:defense response to fungus"/>
    <property type="evidence" value="ECO:0007669"/>
    <property type="project" value="UniProtKB-KW"/>
</dbReference>
<dbReference type="GO" id="GO:0031640">
    <property type="term" value="P:killing of cells of another organism"/>
    <property type="evidence" value="ECO:0007669"/>
    <property type="project" value="UniProtKB-KW"/>
</dbReference>
<dbReference type="CDD" id="cd00107">
    <property type="entry name" value="Knot1"/>
    <property type="match status" value="1"/>
</dbReference>
<dbReference type="Gene3D" id="3.30.30.10">
    <property type="entry name" value="Knottin, scorpion toxin-like"/>
    <property type="match status" value="1"/>
</dbReference>
<dbReference type="InterPro" id="IPR008176">
    <property type="entry name" value="Defensin_plant"/>
</dbReference>
<dbReference type="InterPro" id="IPR003614">
    <property type="entry name" value="Scorpion_toxin-like"/>
</dbReference>
<dbReference type="InterPro" id="IPR036574">
    <property type="entry name" value="Scorpion_toxin-like_sf"/>
</dbReference>
<dbReference type="Pfam" id="PF00304">
    <property type="entry name" value="Gamma-thionin"/>
    <property type="match status" value="1"/>
</dbReference>
<dbReference type="PRINTS" id="PR00288">
    <property type="entry name" value="PUROTHIONIN"/>
</dbReference>
<dbReference type="SMART" id="SM00505">
    <property type="entry name" value="Knot1"/>
    <property type="match status" value="1"/>
</dbReference>
<dbReference type="SUPFAM" id="SSF57095">
    <property type="entry name" value="Scorpion toxin-like"/>
    <property type="match status" value="1"/>
</dbReference>
<dbReference type="PROSITE" id="PS00940">
    <property type="entry name" value="GAMMA_THIONIN"/>
    <property type="match status" value="1"/>
</dbReference>
<accession>P84965</accession>
<evidence type="ECO:0000250" key="1">
    <source>
        <dbReference type="UniProtKB" id="Q8GTM0"/>
    </source>
</evidence>
<evidence type="ECO:0000269" key="2">
    <source>
    </source>
</evidence>
<evidence type="ECO:0000305" key="3"/>
<comment type="function">
    <text evidence="1">Plant defense peptide.</text>
</comment>
<comment type="mass spectrometry" mass="5130.0" method="MALDI" evidence="2"/>
<comment type="similarity">
    <text evidence="3">Belongs to the DEFL family.</text>
</comment>
<organism>
    <name type="scientific">Triticum kiharae</name>
    <name type="common">Wheat</name>
    <dbReference type="NCBI Taxonomy" id="376535"/>
    <lineage>
        <taxon>Eukaryota</taxon>
        <taxon>Viridiplantae</taxon>
        <taxon>Streptophyta</taxon>
        <taxon>Embryophyta</taxon>
        <taxon>Tracheophyta</taxon>
        <taxon>Spermatophyta</taxon>
        <taxon>Magnoliopsida</taxon>
        <taxon>Liliopsida</taxon>
        <taxon>Poales</taxon>
        <taxon>Poaceae</taxon>
        <taxon>BOP clade</taxon>
        <taxon>Pooideae</taxon>
        <taxon>Triticodae</taxon>
        <taxon>Triticeae</taxon>
        <taxon>Triticinae</taxon>
        <taxon>Triticum</taxon>
    </lineage>
</organism>
<sequence length="47" mass="5138">RDCESDSHKFHGACFSDTNCANVCQTEGFTAGKCVGVQRHCHCTKDC</sequence>
<protein>
    <recommendedName>
        <fullName>Defensin Tk-AMP-D1.1</fullName>
    </recommendedName>
</protein>
<keyword id="KW-0929">Antimicrobial</keyword>
<keyword id="KW-0903">Direct protein sequencing</keyword>
<keyword id="KW-1015">Disulfide bond</keyword>
<keyword id="KW-0295">Fungicide</keyword>
<keyword id="KW-0611">Plant defense</keyword>
<proteinExistence type="evidence at protein level"/>
<feature type="chain" id="PRO_0000287887" description="Defensin Tk-AMP-D1.1">
    <location>
        <begin position="1"/>
        <end position="47"/>
    </location>
</feature>
<feature type="disulfide bond" evidence="1">
    <location>
        <begin position="3"/>
        <end position="47"/>
    </location>
</feature>
<feature type="disulfide bond" evidence="1">
    <location>
        <begin position="14"/>
        <end position="34"/>
    </location>
</feature>
<feature type="disulfide bond" evidence="1">
    <location>
        <begin position="20"/>
        <end position="41"/>
    </location>
</feature>
<feature type="disulfide bond" evidence="1">
    <location>
        <begin position="24"/>
        <end position="43"/>
    </location>
</feature>